<accession>B7Q290</accession>
<dbReference type="EMBL" id="DS842501">
    <property type="protein sequence ID" value="EEC12962.1"/>
    <property type="molecule type" value="Genomic_DNA"/>
</dbReference>
<dbReference type="SMR" id="B7Q290"/>
<dbReference type="STRING" id="6945.B7Q290"/>
<dbReference type="PaxDb" id="6945-B7Q290"/>
<dbReference type="EnsemblMetazoa" id="ISCI010018-RA">
    <property type="protein sequence ID" value="ISCI010018-PA"/>
    <property type="gene ID" value="ISCI010018"/>
</dbReference>
<dbReference type="EnsemblMetazoa" id="ISCW010018-RA">
    <property type="protein sequence ID" value="ISCW010018-PA"/>
    <property type="gene ID" value="ISCW010018"/>
</dbReference>
<dbReference type="EnsemblMetazoa" id="XM_002410533.3">
    <property type="protein sequence ID" value="XP_002410578.1"/>
    <property type="gene ID" value="LOC8034809"/>
</dbReference>
<dbReference type="KEGG" id="isc:8034809"/>
<dbReference type="VEuPathDB" id="VectorBase:ISCI010018"/>
<dbReference type="VEuPathDB" id="VectorBase:ISCP_001067"/>
<dbReference type="VEuPathDB" id="VectorBase:ISCW010018"/>
<dbReference type="HOGENOM" id="CLU_181654_0_0_1"/>
<dbReference type="InParanoid" id="B7Q290"/>
<dbReference type="OMA" id="WIMYLIN"/>
<dbReference type="OrthoDB" id="5950777at2759"/>
<dbReference type="PhylomeDB" id="B7Q290"/>
<dbReference type="Proteomes" id="UP000001555">
    <property type="component" value="Unassembled WGS sequence"/>
</dbReference>
<dbReference type="InterPro" id="IPR042407">
    <property type="entry name" value="NCBP2-AS2"/>
</dbReference>
<dbReference type="PANTHER" id="PTHR41161">
    <property type="entry name" value="PROTEIN NCBP2AS2"/>
    <property type="match status" value="1"/>
</dbReference>
<dbReference type="PANTHER" id="PTHR41161:SF1">
    <property type="entry name" value="PROTEIN NCBP2AS2"/>
    <property type="match status" value="1"/>
</dbReference>
<sequence length="95" mass="10957">MVLRILLRYLLHNEQLVQRLADSYPFRRAAQLTASLILRGKSLGQESLELMSTSSLLRKLVERLSQTGEQAKQFSTEKAKRLEEAIKDMKRKQGL</sequence>
<name>NCAS2_IXOSC</name>
<gene>
    <name type="ORF">ISCW010018</name>
</gene>
<feature type="chain" id="PRO_0000370385" description="Protein NCBP2AS2 homolog">
    <location>
        <begin position="1"/>
        <end position="95"/>
    </location>
</feature>
<reference key="1">
    <citation type="submission" date="2008-03" db="EMBL/GenBank/DDBJ databases">
        <title>Annotation of Ixodes scapularis.</title>
        <authorList>
            <consortium name="Ixodes scapularis Genome Project Consortium"/>
            <person name="Caler E."/>
            <person name="Hannick L.I."/>
            <person name="Bidwell S."/>
            <person name="Joardar V."/>
            <person name="Thiagarajan M."/>
            <person name="Amedeo P."/>
            <person name="Galinsky K.J."/>
            <person name="Schobel S."/>
            <person name="Inman J."/>
            <person name="Hostetler J."/>
            <person name="Miller J."/>
            <person name="Hammond M."/>
            <person name="Megy K."/>
            <person name="Lawson D."/>
            <person name="Kodira C."/>
            <person name="Sutton G."/>
            <person name="Meyer J."/>
            <person name="Hill C.A."/>
            <person name="Birren B."/>
            <person name="Nene V."/>
            <person name="Collins F."/>
            <person name="Alarcon-Chaidez F."/>
            <person name="Wikel S."/>
            <person name="Strausberg R."/>
        </authorList>
    </citation>
    <scope>NUCLEOTIDE SEQUENCE [LARGE SCALE GENOMIC DNA]</scope>
    <source>
        <strain>Wikel</strain>
    </source>
</reference>
<keyword id="KW-1185">Reference proteome</keyword>
<organism>
    <name type="scientific">Ixodes scapularis</name>
    <name type="common">Black-legged tick</name>
    <name type="synonym">Deer tick</name>
    <dbReference type="NCBI Taxonomy" id="6945"/>
    <lineage>
        <taxon>Eukaryota</taxon>
        <taxon>Metazoa</taxon>
        <taxon>Ecdysozoa</taxon>
        <taxon>Arthropoda</taxon>
        <taxon>Chelicerata</taxon>
        <taxon>Arachnida</taxon>
        <taxon>Acari</taxon>
        <taxon>Parasitiformes</taxon>
        <taxon>Ixodida</taxon>
        <taxon>Ixodoidea</taxon>
        <taxon>Ixodidae</taxon>
        <taxon>Ixodinae</taxon>
        <taxon>Ixodes</taxon>
    </lineage>
</organism>
<protein>
    <recommendedName>
        <fullName>Protein NCBP2AS2 homolog</fullName>
    </recommendedName>
</protein>
<proteinExistence type="predicted"/>